<sequence>MKQLKKQHEEILKAVVGAYLTQKNEISSALLVKNYGIKFSPAKVRYLMTALEDEGLLVKETKSSGRKPTNKGLEYYAKFLSNAFDLKLINNLEKIFLNRKDNIYNTIEEVTKELASLTGATFVTKFKDPNLILKSINLFEVSESLATIILVVSNGEVLSRKIDIPENKAIKISDLKIAMNIFQDNLIDCKLIDLEKRILLLKDILAEKIIQYEDVIESYVKSILGIGIKSQIYGRENIILSRKIAREDVNEILNILEKNSIWDALEKNSNDFEEIRISINSKGAFFSKRIDENNNLTEISVVAPNESDSNSIKSGIMLLTKIITNNINEKEKDKNERKHS</sequence>
<gene>
    <name evidence="1" type="primary">hrcA</name>
    <name type="ordered locus">MS53_0353</name>
</gene>
<feature type="chain" id="PRO_1000092821" description="Heat-inducible transcription repressor HrcA">
    <location>
        <begin position="1"/>
        <end position="340"/>
    </location>
</feature>
<evidence type="ECO:0000255" key="1">
    <source>
        <dbReference type="HAMAP-Rule" id="MF_00081"/>
    </source>
</evidence>
<protein>
    <recommendedName>
        <fullName evidence="1">Heat-inducible transcription repressor HrcA</fullName>
    </recommendedName>
</protein>
<accession>Q4A656</accession>
<name>HRCA_MYCS5</name>
<organism>
    <name type="scientific">Mycoplasmopsis synoviae (strain 53)</name>
    <name type="common">Mycoplasma synoviae</name>
    <dbReference type="NCBI Taxonomy" id="262723"/>
    <lineage>
        <taxon>Bacteria</taxon>
        <taxon>Bacillati</taxon>
        <taxon>Mycoplasmatota</taxon>
        <taxon>Mycoplasmoidales</taxon>
        <taxon>Metamycoplasmataceae</taxon>
        <taxon>Mycoplasmopsis</taxon>
    </lineage>
</organism>
<dbReference type="EMBL" id="AE017245">
    <property type="protein sequence ID" value="AAZ43765.1"/>
    <property type="molecule type" value="Genomic_DNA"/>
</dbReference>
<dbReference type="RefSeq" id="WP_011283496.1">
    <property type="nucleotide sequence ID" value="NC_007294.1"/>
</dbReference>
<dbReference type="SMR" id="Q4A656"/>
<dbReference type="STRING" id="262723.MS53_0353"/>
<dbReference type="KEGG" id="msy:MS53_0353"/>
<dbReference type="eggNOG" id="COG1420">
    <property type="taxonomic scope" value="Bacteria"/>
</dbReference>
<dbReference type="HOGENOM" id="CLU_050019_1_0_14"/>
<dbReference type="OrthoDB" id="9783139at2"/>
<dbReference type="Proteomes" id="UP000000549">
    <property type="component" value="Chromosome"/>
</dbReference>
<dbReference type="GO" id="GO:0003677">
    <property type="term" value="F:DNA binding"/>
    <property type="evidence" value="ECO:0007669"/>
    <property type="project" value="InterPro"/>
</dbReference>
<dbReference type="GO" id="GO:0045892">
    <property type="term" value="P:negative regulation of DNA-templated transcription"/>
    <property type="evidence" value="ECO:0007669"/>
    <property type="project" value="UniProtKB-UniRule"/>
</dbReference>
<dbReference type="Gene3D" id="1.10.10.10">
    <property type="entry name" value="Winged helix-like DNA-binding domain superfamily/Winged helix DNA-binding domain"/>
    <property type="match status" value="1"/>
</dbReference>
<dbReference type="HAMAP" id="MF_00081">
    <property type="entry name" value="HrcA"/>
    <property type="match status" value="1"/>
</dbReference>
<dbReference type="InterPro" id="IPR002571">
    <property type="entry name" value="HrcA"/>
</dbReference>
<dbReference type="InterPro" id="IPR021153">
    <property type="entry name" value="HrcA_C"/>
</dbReference>
<dbReference type="InterPro" id="IPR036388">
    <property type="entry name" value="WH-like_DNA-bd_sf"/>
</dbReference>
<dbReference type="InterPro" id="IPR036390">
    <property type="entry name" value="WH_DNA-bd_sf"/>
</dbReference>
<dbReference type="PANTHER" id="PTHR34824">
    <property type="entry name" value="HEAT-INDUCIBLE TRANSCRIPTION REPRESSOR HRCA"/>
    <property type="match status" value="1"/>
</dbReference>
<dbReference type="PANTHER" id="PTHR34824:SF1">
    <property type="entry name" value="HEAT-INDUCIBLE TRANSCRIPTION REPRESSOR HRCA"/>
    <property type="match status" value="1"/>
</dbReference>
<dbReference type="Pfam" id="PF01628">
    <property type="entry name" value="HrcA"/>
    <property type="match status" value="1"/>
</dbReference>
<dbReference type="PIRSF" id="PIRSF005485">
    <property type="entry name" value="HrcA"/>
    <property type="match status" value="1"/>
</dbReference>
<dbReference type="SUPFAM" id="SSF55781">
    <property type="entry name" value="GAF domain-like"/>
    <property type="match status" value="1"/>
</dbReference>
<dbReference type="SUPFAM" id="SSF46785">
    <property type="entry name" value="Winged helix' DNA-binding domain"/>
    <property type="match status" value="1"/>
</dbReference>
<keyword id="KW-1185">Reference proteome</keyword>
<keyword id="KW-0678">Repressor</keyword>
<keyword id="KW-0346">Stress response</keyword>
<keyword id="KW-0804">Transcription</keyword>
<keyword id="KW-0805">Transcription regulation</keyword>
<comment type="function">
    <text evidence="1">Negative regulator of class I heat shock genes (grpE-dnaK-dnaJ and groELS operons). Prevents heat-shock induction of these operons.</text>
</comment>
<comment type="similarity">
    <text evidence="1">Belongs to the HrcA family.</text>
</comment>
<proteinExistence type="inferred from homology"/>
<reference key="1">
    <citation type="journal article" date="2005" name="J. Bacteriol.">
        <title>Swine and poultry pathogens: the complete genome sequences of two strains of Mycoplasma hyopneumoniae and a strain of Mycoplasma synoviae.</title>
        <authorList>
            <person name="Vasconcelos A.T.R."/>
            <person name="Ferreira H.B."/>
            <person name="Bizarro C.V."/>
            <person name="Bonatto S.L."/>
            <person name="Carvalho M.O."/>
            <person name="Pinto P.M."/>
            <person name="Almeida D.F."/>
            <person name="Almeida L.G.P."/>
            <person name="Almeida R."/>
            <person name="Alves-Junior L."/>
            <person name="Assuncao E.N."/>
            <person name="Azevedo V.A.C."/>
            <person name="Bogo M.R."/>
            <person name="Brigido M.M."/>
            <person name="Brocchi M."/>
            <person name="Burity H.A."/>
            <person name="Camargo A.A."/>
            <person name="Camargo S.S."/>
            <person name="Carepo M.S."/>
            <person name="Carraro D.M."/>
            <person name="de Mattos Cascardo J.C."/>
            <person name="Castro L.A."/>
            <person name="Cavalcanti G."/>
            <person name="Chemale G."/>
            <person name="Collevatti R.G."/>
            <person name="Cunha C.W."/>
            <person name="Dallagiovanna B."/>
            <person name="Dambros B.P."/>
            <person name="Dellagostin O.A."/>
            <person name="Falcao C."/>
            <person name="Fantinatti-Garboggini F."/>
            <person name="Felipe M.S.S."/>
            <person name="Fiorentin L."/>
            <person name="Franco G.R."/>
            <person name="Freitas N.S.A."/>
            <person name="Frias D."/>
            <person name="Grangeiro T.B."/>
            <person name="Grisard E.C."/>
            <person name="Guimaraes C.T."/>
            <person name="Hungria M."/>
            <person name="Jardim S.N."/>
            <person name="Krieger M.A."/>
            <person name="Laurino J.P."/>
            <person name="Lima L.F.A."/>
            <person name="Lopes M.I."/>
            <person name="Loreto E.L.S."/>
            <person name="Madeira H.M.F."/>
            <person name="Manfio G.P."/>
            <person name="Maranhao A.Q."/>
            <person name="Martinkovics C.T."/>
            <person name="Medeiros S.R.B."/>
            <person name="Moreira M.A.M."/>
            <person name="Neiva M."/>
            <person name="Ramalho-Neto C.E."/>
            <person name="Nicolas M.F."/>
            <person name="Oliveira S.C."/>
            <person name="Paixao R.F.C."/>
            <person name="Pedrosa F.O."/>
            <person name="Pena S.D.J."/>
            <person name="Pereira M."/>
            <person name="Pereira-Ferrari L."/>
            <person name="Piffer I."/>
            <person name="Pinto L.S."/>
            <person name="Potrich D.P."/>
            <person name="Salim A.C.M."/>
            <person name="Santos F.R."/>
            <person name="Schmitt R."/>
            <person name="Schneider M.P.C."/>
            <person name="Schrank A."/>
            <person name="Schrank I.S."/>
            <person name="Schuck A.F."/>
            <person name="Seuanez H.N."/>
            <person name="Silva D.W."/>
            <person name="Silva R."/>
            <person name="Silva S.C."/>
            <person name="Soares C.M.A."/>
            <person name="Souza K.R.L."/>
            <person name="Souza R.C."/>
            <person name="Staats C.C."/>
            <person name="Steffens M.B.R."/>
            <person name="Teixeira S.M.R."/>
            <person name="Urmenyi T.P."/>
            <person name="Vainstein M.H."/>
            <person name="Zuccherato L.W."/>
            <person name="Simpson A.J.G."/>
            <person name="Zaha A."/>
        </authorList>
    </citation>
    <scope>NUCLEOTIDE SEQUENCE [LARGE SCALE GENOMIC DNA]</scope>
    <source>
        <strain>53</strain>
    </source>
</reference>